<sequence>MRPLRDDAKRRADRQLSASMKPTSSNRPFSDRVPDRFKDGDDAQFDFTAPPRGMGSRDGNVHYMQQSLFSMIAAVGSKSDFHARFDESSDSDGEMEEQPRVEQTTGKASSRTPPVPSLDPRQPSKRSEPSKLVLEERGRRHQRACSDNKLLQRLPKSDAEGGVNESSNQSDSLLKVPPLRRTRSATPRAAPVLSRMVEAQSHFDLTSATPYLPPNNPDKSMEDQPQSSASALSMRLMKMFEFAKPEKVLVEYACSLLQSMLLQGYMYVTEGHICFYAYLPKKSNVAIKSGYLSKRGRKNPKYHRYWFALKGDVLSYYADPSNLYFPSGHVDLRYGISASLTERKDGDAKDFQVTTDQRTYLFRADSATSAKEWVKALQQVIFRTHNEGDSVKVSFPIANVIDLEESPMADFAETFKIRVIDSGETYAIDEYFFSFFDSGQDAFNYIKGLVNAVSTTTATKEAQDQHDIKHQPESSRTAYKRQSVSSVRVSDQRREDSPRKRSSSVGNENQGSADSFAEQGTGSSPIIQSMTDTTESASQILHRSDVFQAPTMRTLQGRSLDVGESIRRYSDDTTPSASARLDLDAAVGSPCGTLGHNETTEDARYATGQSDLMQSSRPSSVTQLNELVKAGVYPLQRAAGFAEYLKSRSKQMSTLLATESMGYIEKVSGMWIGGQKHYGEREGPLLEDQNVDPEDNEGSFNYGDRFRAHFALPPTEKLQATYYAYLHRVLPLYGKIYISQKKLCFRSLIPGTRTKMILPFKDIENVEKEKGFRFGYHGLVVIIRGHEELFFEFNASDSRDDCAVTLHQNLESVKFLVESGLLAEDERDEVEAAKAEHRMLEEARLDSPEGHDAPPTLTEDSSEIHPFFDDPRASIINFKPPEPLRITCLTIGSRGDVQPYIALCKGLLAEGHKPKIATHAEFEPWIRKHGIDFAPVDGDPAELMRICVENGMFTYSFLREASLKFRGWIDDLLSSAWIGCQGSDLLIESPSAMAGIHIAEALRIPYFRGFTMPWTRTRAYPHAFAVPENRMGGAYNYITYVMFDNIFWKAIAGQVNRWRNNELGLKATTLDKMQQNKVPFLYNYSPSVVAPPLDYPDWIRITGYWFLNEGTDWTPPTELSNFIAQARSDGKKLVYIGFGSIVVSDPSALTRTVIESVLKADVRCILSKGWSDRLGDPASTKTEIPLPPEILQIQSAPHDWLFSQIDAAAHHGGAGTTGASLRAGVPTIVKPFFGDQFFFGSRVEDLGVGICMKKLNVSVFSRALWEATHSERMIVKARNLGIQIRNEDGVATAIQALYRDLEYAKTLARQKSLASSTPFSPTPTAKASPDGGDDDLDDIEEWTFVGDETGFDIAKRMRERAASDADRIGSNMFQ</sequence>
<evidence type="ECO:0000250" key="1">
    <source>
        <dbReference type="UniProtKB" id="Q06321"/>
    </source>
</evidence>
<evidence type="ECO:0000250" key="2">
    <source>
        <dbReference type="UniProtKB" id="Q2U0C3"/>
    </source>
</evidence>
<evidence type="ECO:0000255" key="3"/>
<evidence type="ECO:0000255" key="4">
    <source>
        <dbReference type="PROSITE-ProRule" id="PRU00145"/>
    </source>
</evidence>
<evidence type="ECO:0000256" key="5">
    <source>
        <dbReference type="SAM" id="MobiDB-lite"/>
    </source>
</evidence>
<evidence type="ECO:0000305" key="6"/>
<proteinExistence type="inferred from homology"/>
<comment type="function">
    <text evidence="1">Sterol glycosyltransferase responsible for the glycosylation of ergosterol to form ergosterol-glucoside.</text>
</comment>
<comment type="catalytic activity">
    <reaction evidence="1">
        <text>a sterol + UDP-alpha-D-glucose = a sterol 3-beta-D-glucoside + UDP + H(+)</text>
        <dbReference type="Rhea" id="RHEA:22724"/>
        <dbReference type="ChEBI" id="CHEBI:15378"/>
        <dbReference type="ChEBI" id="CHEBI:15889"/>
        <dbReference type="ChEBI" id="CHEBI:37424"/>
        <dbReference type="ChEBI" id="CHEBI:58223"/>
        <dbReference type="ChEBI" id="CHEBI:58885"/>
        <dbReference type="EC" id="2.4.1.173"/>
    </reaction>
    <physiologicalReaction direction="left-to-right" evidence="1">
        <dbReference type="Rhea" id="RHEA:22725"/>
    </physiologicalReaction>
</comment>
<comment type="catalytic activity">
    <reaction evidence="1">
        <text>ergosterol + UDP-alpha-D-glucose = ergosteryl 3-beta-D-glucoside + UDP + H(+)</text>
        <dbReference type="Rhea" id="RHEA:61836"/>
        <dbReference type="ChEBI" id="CHEBI:15378"/>
        <dbReference type="ChEBI" id="CHEBI:16933"/>
        <dbReference type="ChEBI" id="CHEBI:52973"/>
        <dbReference type="ChEBI" id="CHEBI:58223"/>
        <dbReference type="ChEBI" id="CHEBI:58885"/>
    </reaction>
    <physiologicalReaction direction="left-to-right" evidence="1">
        <dbReference type="Rhea" id="RHEA:61837"/>
    </physiologicalReaction>
</comment>
<comment type="subcellular location">
    <subcellularLocation>
        <location evidence="1">Cytoplasm</location>
    </subcellularLocation>
    <subcellularLocation>
        <location evidence="2">Preautophagosomal structure membrane</location>
        <topology evidence="2">Peripheral membrane protein</topology>
    </subcellularLocation>
</comment>
<comment type="domain">
    <text evidence="2">The GRAM and PH domains are required for the localization of ATG26 to the preautophagosomal structure (PAS) and are involved in autophagy (By similarity).</text>
</comment>
<comment type="similarity">
    <text evidence="6">Belongs to the glycosyltransferase 28 family.</text>
</comment>
<reference key="1">
    <citation type="journal article" date="2007" name="Autophagy">
        <title>ATG genes involved in non-selective autophagy are conserved from yeast to man, but the selective Cvt and pexophagy pathways also require organism-specific genes.</title>
        <authorList>
            <person name="Meijer W.H."/>
            <person name="van der Klei I.J."/>
            <person name="Veenhuis M."/>
            <person name="Kiel J.A.K.W."/>
        </authorList>
    </citation>
    <scope>NUCLEOTIDE SEQUENCE [GENOMIC DNA]</scope>
    <scope>FUNCTION</scope>
</reference>
<reference key="2">
    <citation type="journal article" date="2008" name="Nat. Biotechnol.">
        <title>Genome sequencing and analysis of the filamentous fungus Penicillium chrysogenum.</title>
        <authorList>
            <person name="van den Berg M.A."/>
            <person name="Albang R."/>
            <person name="Albermann K."/>
            <person name="Badger J.H."/>
            <person name="Daran J.-M."/>
            <person name="Driessen A.J.M."/>
            <person name="Garcia-Estrada C."/>
            <person name="Fedorova N.D."/>
            <person name="Harris D.M."/>
            <person name="Heijne W.H.M."/>
            <person name="Joardar V.S."/>
            <person name="Kiel J.A.K.W."/>
            <person name="Kovalchuk A."/>
            <person name="Martin J.F."/>
            <person name="Nierman W.C."/>
            <person name="Nijland J.G."/>
            <person name="Pronk J.T."/>
            <person name="Roubos J.A."/>
            <person name="van der Klei I.J."/>
            <person name="van Peij N.N.M.E."/>
            <person name="Veenhuis M."/>
            <person name="von Doehren H."/>
            <person name="Wagner C."/>
            <person name="Wortman J.R."/>
            <person name="Bovenberg R.A.L."/>
        </authorList>
    </citation>
    <scope>NUCLEOTIDE SEQUENCE [LARGE SCALE GENOMIC DNA]</scope>
    <source>
        <strain>ATCC 28089 / DSM 1075 / NRRL 1951 / Wisconsin 54-1255</strain>
    </source>
</reference>
<keyword id="KW-0072">Autophagy</keyword>
<keyword id="KW-0963">Cytoplasm</keyword>
<keyword id="KW-0328">Glycosyltransferase</keyword>
<keyword id="KW-0444">Lipid biosynthesis</keyword>
<keyword id="KW-0443">Lipid metabolism</keyword>
<keyword id="KW-0472">Membrane</keyword>
<keyword id="KW-0653">Protein transport</keyword>
<keyword id="KW-1185">Reference proteome</keyword>
<keyword id="KW-0677">Repeat</keyword>
<keyword id="KW-0752">Steroid biosynthesis</keyword>
<keyword id="KW-0753">Steroid metabolism</keyword>
<keyword id="KW-0756">Sterol biosynthesis</keyword>
<keyword id="KW-1207">Sterol metabolism</keyword>
<keyword id="KW-0808">Transferase</keyword>
<keyword id="KW-0813">Transport</keyword>
<gene>
    <name evidence="1" type="primary">atg26</name>
    <name type="ORF">Pc12g16190</name>
</gene>
<protein>
    <recommendedName>
        <fullName evidence="6">Sterol 3-beta-glucosyltransferase</fullName>
        <ecNumber evidence="1">2.4.1.-</ecNumber>
        <ecNumber evidence="1">2.4.1.173</ecNumber>
    </recommendedName>
    <alternativeName>
        <fullName evidence="1">Autophagy-related protein 26</fullName>
    </alternativeName>
</protein>
<feature type="chain" id="PRO_0000318045" description="Sterol 3-beta-glucosyltransferase">
    <location>
        <begin position="1"/>
        <end position="1374"/>
    </location>
</feature>
<feature type="domain" description="GRAM 1" evidence="3">
    <location>
        <begin position="234"/>
        <end position="283"/>
    </location>
</feature>
<feature type="domain" description="PH" evidence="4">
    <location>
        <begin position="285"/>
        <end position="382"/>
    </location>
</feature>
<feature type="domain" description="GRAM 2" evidence="3">
    <location>
        <begin position="704"/>
        <end position="770"/>
    </location>
</feature>
<feature type="region of interest" description="Disordered" evidence="5">
    <location>
        <begin position="1"/>
        <end position="60"/>
    </location>
</feature>
<feature type="region of interest" description="Disordered" evidence="5">
    <location>
        <begin position="83"/>
        <end position="190"/>
    </location>
</feature>
<feature type="region of interest" description="Disordered" evidence="5">
    <location>
        <begin position="206"/>
        <end position="227"/>
    </location>
</feature>
<feature type="region of interest" description="Disordered" evidence="5">
    <location>
        <begin position="458"/>
        <end position="538"/>
    </location>
</feature>
<feature type="region of interest" description="Disordered" evidence="5">
    <location>
        <begin position="1314"/>
        <end position="1338"/>
    </location>
</feature>
<feature type="compositionally biased region" description="Basic and acidic residues" evidence="5">
    <location>
        <begin position="1"/>
        <end position="14"/>
    </location>
</feature>
<feature type="compositionally biased region" description="Polar residues" evidence="5">
    <location>
        <begin position="16"/>
        <end position="28"/>
    </location>
</feature>
<feature type="compositionally biased region" description="Basic and acidic residues" evidence="5">
    <location>
        <begin position="29"/>
        <end position="41"/>
    </location>
</feature>
<feature type="compositionally biased region" description="Polar residues" evidence="5">
    <location>
        <begin position="101"/>
        <end position="112"/>
    </location>
</feature>
<feature type="compositionally biased region" description="Basic and acidic residues" evidence="5">
    <location>
        <begin position="125"/>
        <end position="138"/>
    </location>
</feature>
<feature type="compositionally biased region" description="Basic and acidic residues" evidence="5">
    <location>
        <begin position="461"/>
        <end position="473"/>
    </location>
</feature>
<feature type="compositionally biased region" description="Basic and acidic residues" evidence="5">
    <location>
        <begin position="490"/>
        <end position="499"/>
    </location>
</feature>
<feature type="compositionally biased region" description="Polar residues" evidence="5">
    <location>
        <begin position="503"/>
        <end position="538"/>
    </location>
</feature>
<feature type="compositionally biased region" description="Polar residues" evidence="5">
    <location>
        <begin position="1314"/>
        <end position="1325"/>
    </location>
</feature>
<feature type="binding site" evidence="1">
    <location>
        <position position="893"/>
    </location>
    <ligand>
        <name>UDP-alpha-D-glucose</name>
        <dbReference type="ChEBI" id="CHEBI:58885"/>
    </ligand>
</feature>
<feature type="binding site" evidence="1">
    <location>
        <position position="894"/>
    </location>
    <ligand>
        <name>UDP-alpha-D-glucose</name>
        <dbReference type="ChEBI" id="CHEBI:58885"/>
    </ligand>
</feature>
<feature type="binding site" evidence="1">
    <location>
        <position position="896"/>
    </location>
    <ligand>
        <name>UDP-alpha-D-glucose</name>
        <dbReference type="ChEBI" id="CHEBI:58885"/>
    </ligand>
</feature>
<feature type="binding site" evidence="1">
    <location>
        <position position="1196"/>
    </location>
    <ligand>
        <name>UDP-alpha-D-glucose</name>
        <dbReference type="ChEBI" id="CHEBI:58885"/>
    </ligand>
</feature>
<feature type="binding site" evidence="1">
    <location>
        <position position="1198"/>
    </location>
    <ligand>
        <name>UDP-alpha-D-glucose</name>
        <dbReference type="ChEBI" id="CHEBI:58885"/>
    </ligand>
</feature>
<feature type="binding site" evidence="1">
    <location>
        <position position="1211"/>
    </location>
    <ligand>
        <name>UDP-alpha-D-glucose</name>
        <dbReference type="ChEBI" id="CHEBI:58885"/>
    </ligand>
</feature>
<feature type="binding site" evidence="1">
    <location>
        <position position="1215"/>
    </location>
    <ligand>
        <name>UDP-alpha-D-glucose</name>
        <dbReference type="ChEBI" id="CHEBI:58885"/>
    </ligand>
</feature>
<feature type="binding site" evidence="1">
    <location>
        <position position="1216"/>
    </location>
    <ligand>
        <name>UDP-alpha-D-glucose</name>
        <dbReference type="ChEBI" id="CHEBI:58885"/>
    </ligand>
</feature>
<feature type="binding site" evidence="1">
    <location>
        <position position="1235"/>
    </location>
    <ligand>
        <name>UDP-alpha-D-glucose</name>
        <dbReference type="ChEBI" id="CHEBI:58885"/>
    </ligand>
</feature>
<feature type="binding site" evidence="1">
    <location>
        <position position="1236"/>
    </location>
    <ligand>
        <name>UDP-alpha-D-glucose</name>
        <dbReference type="ChEBI" id="CHEBI:58885"/>
    </ligand>
</feature>
<name>ATG26_PENRW</name>
<organism>
    <name type="scientific">Penicillium rubens (strain ATCC 28089 / DSM 1075 / NRRL 1951 / Wisconsin 54-1255)</name>
    <name type="common">Penicillium chrysogenum</name>
    <dbReference type="NCBI Taxonomy" id="500485"/>
    <lineage>
        <taxon>Eukaryota</taxon>
        <taxon>Fungi</taxon>
        <taxon>Dikarya</taxon>
        <taxon>Ascomycota</taxon>
        <taxon>Pezizomycotina</taxon>
        <taxon>Eurotiomycetes</taxon>
        <taxon>Eurotiomycetidae</taxon>
        <taxon>Eurotiales</taxon>
        <taxon>Aspergillaceae</taxon>
        <taxon>Penicillium</taxon>
        <taxon>Penicillium chrysogenum species complex</taxon>
    </lineage>
</organism>
<dbReference type="EC" id="2.4.1.-" evidence="1"/>
<dbReference type="EC" id="2.4.1.173" evidence="1"/>
<dbReference type="EMBL" id="EF110900">
    <property type="protein sequence ID" value="ABO31321.1"/>
    <property type="molecule type" value="Genomic_DNA"/>
</dbReference>
<dbReference type="EMBL" id="AM920427">
    <property type="protein sequence ID" value="CAP81246.1"/>
    <property type="molecule type" value="Genomic_DNA"/>
</dbReference>
<dbReference type="RefSeq" id="XP_002558417.1">
    <property type="nucleotide sequence ID" value="XM_002558371.1"/>
</dbReference>
<dbReference type="SMR" id="A7KAN4"/>
<dbReference type="STRING" id="500485.A7KAN4"/>
<dbReference type="CAZy" id="GT1">
    <property type="family name" value="Glycosyltransferase Family 1"/>
</dbReference>
<dbReference type="GeneID" id="8306628"/>
<dbReference type="KEGG" id="pcs:N7525_000997"/>
<dbReference type="VEuPathDB" id="FungiDB:PCH_Pc12g16190"/>
<dbReference type="eggNOG" id="KOG1192">
    <property type="taxonomic scope" value="Eukaryota"/>
</dbReference>
<dbReference type="HOGENOM" id="CLU_000537_6_0_1"/>
<dbReference type="OMA" id="WRNKTLG"/>
<dbReference type="OrthoDB" id="10261837at2759"/>
<dbReference type="BioCyc" id="PCHR:PC12G16190-MONOMER"/>
<dbReference type="Proteomes" id="UP000000724">
    <property type="component" value="Contig Pc00c12"/>
</dbReference>
<dbReference type="GO" id="GO:0034045">
    <property type="term" value="C:phagophore assembly site membrane"/>
    <property type="evidence" value="ECO:0007669"/>
    <property type="project" value="UniProtKB-SubCell"/>
</dbReference>
<dbReference type="GO" id="GO:0016906">
    <property type="term" value="F:sterol 3-beta-glucosyltransferase activity"/>
    <property type="evidence" value="ECO:0007669"/>
    <property type="project" value="UniProtKB-EC"/>
</dbReference>
<dbReference type="GO" id="GO:0006914">
    <property type="term" value="P:autophagy"/>
    <property type="evidence" value="ECO:0007669"/>
    <property type="project" value="UniProtKB-KW"/>
</dbReference>
<dbReference type="GO" id="GO:0005975">
    <property type="term" value="P:carbohydrate metabolic process"/>
    <property type="evidence" value="ECO:0007669"/>
    <property type="project" value="InterPro"/>
</dbReference>
<dbReference type="GO" id="GO:0030259">
    <property type="term" value="P:lipid glycosylation"/>
    <property type="evidence" value="ECO:0007669"/>
    <property type="project" value="InterPro"/>
</dbReference>
<dbReference type="GO" id="GO:0015031">
    <property type="term" value="P:protein transport"/>
    <property type="evidence" value="ECO:0007669"/>
    <property type="project" value="UniProtKB-KW"/>
</dbReference>
<dbReference type="GO" id="GO:0016126">
    <property type="term" value="P:sterol biosynthetic process"/>
    <property type="evidence" value="ECO:0007669"/>
    <property type="project" value="UniProtKB-KW"/>
</dbReference>
<dbReference type="CDD" id="cd03784">
    <property type="entry name" value="GT1_Gtf-like"/>
    <property type="match status" value="1"/>
</dbReference>
<dbReference type="CDD" id="cd13215">
    <property type="entry name" value="PH-GRAM1_AGT26"/>
    <property type="match status" value="1"/>
</dbReference>
<dbReference type="CDD" id="cd13216">
    <property type="entry name" value="PH-GRAM2_AGT26"/>
    <property type="match status" value="1"/>
</dbReference>
<dbReference type="FunFam" id="2.30.29.30:FF:000303">
    <property type="entry name" value="Sterol 3-beta-glucosyltransferase"/>
    <property type="match status" value="1"/>
</dbReference>
<dbReference type="FunFam" id="2.30.29.30:FF:000560">
    <property type="entry name" value="Sterol 3-beta-glucosyltransferase"/>
    <property type="match status" value="1"/>
</dbReference>
<dbReference type="FunFam" id="3.40.50.2000:FF:000029">
    <property type="entry name" value="Sterol 3-beta-glucosyltransferase"/>
    <property type="match status" value="1"/>
</dbReference>
<dbReference type="FunFam" id="3.40.50.2000:FF:000009">
    <property type="entry name" value="Sterol 3-beta-glucosyltransferase UGT80A2"/>
    <property type="match status" value="1"/>
</dbReference>
<dbReference type="Gene3D" id="3.40.50.2000">
    <property type="entry name" value="Glycogen Phosphorylase B"/>
    <property type="match status" value="2"/>
</dbReference>
<dbReference type="Gene3D" id="2.30.29.30">
    <property type="entry name" value="Pleckstrin-homology domain (PH domain)/Phosphotyrosine-binding domain (PTB)"/>
    <property type="match status" value="3"/>
</dbReference>
<dbReference type="InterPro" id="IPR048066">
    <property type="entry name" value="ATG26_PH_GRAM1"/>
</dbReference>
<dbReference type="InterPro" id="IPR048065">
    <property type="entry name" value="ATG26_PH_GRAM2"/>
</dbReference>
<dbReference type="InterPro" id="IPR010610">
    <property type="entry name" value="EryCIII-like_C"/>
</dbReference>
<dbReference type="InterPro" id="IPR050426">
    <property type="entry name" value="Glycosyltransferase_28"/>
</dbReference>
<dbReference type="InterPro" id="IPR004276">
    <property type="entry name" value="GlycoTrans_28_N"/>
</dbReference>
<dbReference type="InterPro" id="IPR004182">
    <property type="entry name" value="GRAM"/>
</dbReference>
<dbReference type="InterPro" id="IPR011993">
    <property type="entry name" value="PH-like_dom_sf"/>
</dbReference>
<dbReference type="InterPro" id="IPR001849">
    <property type="entry name" value="PH_domain"/>
</dbReference>
<dbReference type="InterPro" id="IPR002213">
    <property type="entry name" value="UDP_glucos_trans"/>
</dbReference>
<dbReference type="PANTHER" id="PTHR48050">
    <property type="entry name" value="STEROL 3-BETA-GLUCOSYLTRANSFERASE"/>
    <property type="match status" value="1"/>
</dbReference>
<dbReference type="PANTHER" id="PTHR48050:SF25">
    <property type="entry name" value="STEROL 3-BETA-GLUCOSYLTRANSFERASE"/>
    <property type="match status" value="1"/>
</dbReference>
<dbReference type="Pfam" id="PF06722">
    <property type="entry name" value="EryCIII-like_C"/>
    <property type="match status" value="1"/>
</dbReference>
<dbReference type="Pfam" id="PF03033">
    <property type="entry name" value="Glyco_transf_28"/>
    <property type="match status" value="1"/>
</dbReference>
<dbReference type="Pfam" id="PF02893">
    <property type="entry name" value="GRAM"/>
    <property type="match status" value="2"/>
</dbReference>
<dbReference type="Pfam" id="PF00169">
    <property type="entry name" value="PH"/>
    <property type="match status" value="1"/>
</dbReference>
<dbReference type="SMART" id="SM00568">
    <property type="entry name" value="GRAM"/>
    <property type="match status" value="2"/>
</dbReference>
<dbReference type="SMART" id="SM00233">
    <property type="entry name" value="PH"/>
    <property type="match status" value="1"/>
</dbReference>
<dbReference type="SUPFAM" id="SSF50729">
    <property type="entry name" value="PH domain-like"/>
    <property type="match status" value="1"/>
</dbReference>
<dbReference type="SUPFAM" id="SSF53756">
    <property type="entry name" value="UDP-Glycosyltransferase/glycogen phosphorylase"/>
    <property type="match status" value="1"/>
</dbReference>
<dbReference type="PROSITE" id="PS50003">
    <property type="entry name" value="PH_DOMAIN"/>
    <property type="match status" value="1"/>
</dbReference>
<accession>A7KAN4</accession>
<accession>B6GYP9</accession>